<evidence type="ECO:0000255" key="1">
    <source>
        <dbReference type="HAMAP-Rule" id="MF_01694"/>
    </source>
</evidence>
<evidence type="ECO:0000255" key="2">
    <source>
        <dbReference type="PROSITE-ProRule" id="PRU01266"/>
    </source>
</evidence>
<name>BIOB_COXB1</name>
<comment type="function">
    <text evidence="1">Catalyzes the conversion of dethiobiotin (DTB) to biotin by the insertion of a sulfur atom into dethiobiotin via a radical-based mechanism.</text>
</comment>
<comment type="catalytic activity">
    <reaction evidence="1">
        <text>(4R,5S)-dethiobiotin + (sulfur carrier)-SH + 2 reduced [2Fe-2S]-[ferredoxin] + 2 S-adenosyl-L-methionine = (sulfur carrier)-H + biotin + 2 5'-deoxyadenosine + 2 L-methionine + 2 oxidized [2Fe-2S]-[ferredoxin]</text>
        <dbReference type="Rhea" id="RHEA:22060"/>
        <dbReference type="Rhea" id="RHEA-COMP:10000"/>
        <dbReference type="Rhea" id="RHEA-COMP:10001"/>
        <dbReference type="Rhea" id="RHEA-COMP:14737"/>
        <dbReference type="Rhea" id="RHEA-COMP:14739"/>
        <dbReference type="ChEBI" id="CHEBI:17319"/>
        <dbReference type="ChEBI" id="CHEBI:29917"/>
        <dbReference type="ChEBI" id="CHEBI:33737"/>
        <dbReference type="ChEBI" id="CHEBI:33738"/>
        <dbReference type="ChEBI" id="CHEBI:57586"/>
        <dbReference type="ChEBI" id="CHEBI:57844"/>
        <dbReference type="ChEBI" id="CHEBI:59789"/>
        <dbReference type="ChEBI" id="CHEBI:64428"/>
        <dbReference type="ChEBI" id="CHEBI:149473"/>
        <dbReference type="EC" id="2.8.1.6"/>
    </reaction>
</comment>
<comment type="cofactor">
    <cofactor evidence="1">
        <name>[4Fe-4S] cluster</name>
        <dbReference type="ChEBI" id="CHEBI:49883"/>
    </cofactor>
    <text evidence="1">Binds 1 [4Fe-4S] cluster. The cluster is coordinated with 3 cysteines and an exchangeable S-adenosyl-L-methionine.</text>
</comment>
<comment type="cofactor">
    <cofactor evidence="1">
        <name>[2Fe-2S] cluster</name>
        <dbReference type="ChEBI" id="CHEBI:190135"/>
    </cofactor>
    <text evidence="1">Binds 1 [2Fe-2S] cluster. The cluster is coordinated with 3 cysteines and 1 arginine.</text>
</comment>
<comment type="pathway">
    <text evidence="1">Cofactor biosynthesis; biotin biosynthesis; biotin from 7,8-diaminononanoate: step 2/2.</text>
</comment>
<comment type="subunit">
    <text evidence="1">Homodimer.</text>
</comment>
<comment type="similarity">
    <text evidence="1">Belongs to the radical SAM superfamily. Biotin synthase family.</text>
</comment>
<dbReference type="EC" id="2.8.1.6" evidence="1"/>
<dbReference type="EMBL" id="CP001020">
    <property type="protein sequence ID" value="ACJ20074.1"/>
    <property type="molecule type" value="Genomic_DNA"/>
</dbReference>
<dbReference type="RefSeq" id="WP_005768604.1">
    <property type="nucleotide sequence ID" value="NC_011528.1"/>
</dbReference>
<dbReference type="SMR" id="B6J725"/>
<dbReference type="KEGG" id="cbc:CbuK_0835"/>
<dbReference type="HOGENOM" id="CLU_033172_1_2_6"/>
<dbReference type="UniPathway" id="UPA00078">
    <property type="reaction ID" value="UER00162"/>
</dbReference>
<dbReference type="GO" id="GO:0051537">
    <property type="term" value="F:2 iron, 2 sulfur cluster binding"/>
    <property type="evidence" value="ECO:0007669"/>
    <property type="project" value="UniProtKB-KW"/>
</dbReference>
<dbReference type="GO" id="GO:0051539">
    <property type="term" value="F:4 iron, 4 sulfur cluster binding"/>
    <property type="evidence" value="ECO:0007669"/>
    <property type="project" value="UniProtKB-KW"/>
</dbReference>
<dbReference type="GO" id="GO:0004076">
    <property type="term" value="F:biotin synthase activity"/>
    <property type="evidence" value="ECO:0007669"/>
    <property type="project" value="UniProtKB-UniRule"/>
</dbReference>
<dbReference type="GO" id="GO:0005506">
    <property type="term" value="F:iron ion binding"/>
    <property type="evidence" value="ECO:0007669"/>
    <property type="project" value="UniProtKB-UniRule"/>
</dbReference>
<dbReference type="GO" id="GO:0009102">
    <property type="term" value="P:biotin biosynthetic process"/>
    <property type="evidence" value="ECO:0007669"/>
    <property type="project" value="UniProtKB-UniRule"/>
</dbReference>
<dbReference type="CDD" id="cd01335">
    <property type="entry name" value="Radical_SAM"/>
    <property type="match status" value="1"/>
</dbReference>
<dbReference type="FunFam" id="3.20.20.70:FF:000011">
    <property type="entry name" value="Biotin synthase"/>
    <property type="match status" value="1"/>
</dbReference>
<dbReference type="Gene3D" id="3.20.20.70">
    <property type="entry name" value="Aldolase class I"/>
    <property type="match status" value="1"/>
</dbReference>
<dbReference type="HAMAP" id="MF_01694">
    <property type="entry name" value="BioB"/>
    <property type="match status" value="1"/>
</dbReference>
<dbReference type="InterPro" id="IPR013785">
    <property type="entry name" value="Aldolase_TIM"/>
</dbReference>
<dbReference type="InterPro" id="IPR010722">
    <property type="entry name" value="BATS_dom"/>
</dbReference>
<dbReference type="InterPro" id="IPR002684">
    <property type="entry name" value="Biotin_synth/BioAB"/>
</dbReference>
<dbReference type="InterPro" id="IPR024177">
    <property type="entry name" value="Biotin_synthase"/>
</dbReference>
<dbReference type="InterPro" id="IPR006638">
    <property type="entry name" value="Elp3/MiaA/NifB-like_rSAM"/>
</dbReference>
<dbReference type="InterPro" id="IPR007197">
    <property type="entry name" value="rSAM"/>
</dbReference>
<dbReference type="NCBIfam" id="TIGR00433">
    <property type="entry name" value="bioB"/>
    <property type="match status" value="1"/>
</dbReference>
<dbReference type="PANTHER" id="PTHR22976">
    <property type="entry name" value="BIOTIN SYNTHASE"/>
    <property type="match status" value="1"/>
</dbReference>
<dbReference type="PANTHER" id="PTHR22976:SF2">
    <property type="entry name" value="BIOTIN SYNTHASE, MITOCHONDRIAL"/>
    <property type="match status" value="1"/>
</dbReference>
<dbReference type="Pfam" id="PF06968">
    <property type="entry name" value="BATS"/>
    <property type="match status" value="1"/>
</dbReference>
<dbReference type="Pfam" id="PF04055">
    <property type="entry name" value="Radical_SAM"/>
    <property type="match status" value="1"/>
</dbReference>
<dbReference type="PIRSF" id="PIRSF001619">
    <property type="entry name" value="Biotin_synth"/>
    <property type="match status" value="1"/>
</dbReference>
<dbReference type="SFLD" id="SFLDG01060">
    <property type="entry name" value="BATS_domain_containing"/>
    <property type="match status" value="1"/>
</dbReference>
<dbReference type="SFLD" id="SFLDF00272">
    <property type="entry name" value="biotin_synthase"/>
    <property type="match status" value="1"/>
</dbReference>
<dbReference type="SMART" id="SM00876">
    <property type="entry name" value="BATS"/>
    <property type="match status" value="1"/>
</dbReference>
<dbReference type="SMART" id="SM00729">
    <property type="entry name" value="Elp3"/>
    <property type="match status" value="1"/>
</dbReference>
<dbReference type="SUPFAM" id="SSF102114">
    <property type="entry name" value="Radical SAM enzymes"/>
    <property type="match status" value="1"/>
</dbReference>
<dbReference type="PROSITE" id="PS51918">
    <property type="entry name" value="RADICAL_SAM"/>
    <property type="match status" value="1"/>
</dbReference>
<organism>
    <name type="scientific">Coxiella burnetii (strain CbuK_Q154)</name>
    <name type="common">Coxiella burnetii (strain Q154)</name>
    <dbReference type="NCBI Taxonomy" id="434924"/>
    <lineage>
        <taxon>Bacteria</taxon>
        <taxon>Pseudomonadati</taxon>
        <taxon>Pseudomonadota</taxon>
        <taxon>Gammaproteobacteria</taxon>
        <taxon>Legionellales</taxon>
        <taxon>Coxiellaceae</taxon>
        <taxon>Coxiella</taxon>
    </lineage>
</organism>
<sequence length="321" mass="36252">MKGRNWNQASVAKLFELPFFELLYKAYETHRSHFDVRDMELCTLSSIKTGTCPEDCAYCPQSGHYKTDVEREKLINLEAVLEQAKVAKENGARRFCMGAAWRSPPKRELPKVLEMIKSVKALGLETCVTLGMLDQEQALQLKEAGLDFYNHNLDTSPEFYKKIITTRTYQDRMETLKNVRNAGINVCCGGILGMGESRADRIQLLLELYQLPEPPTSIPINQLIPIKGTPLENTKAIDPFEFIKTIAITRLLFPTSVIRLSAGREAMSDELQAWCFMAGANSIFYGDKLLTAKNPGQNRDVNLLKKLGLKVPVLTEEYACY</sequence>
<feature type="chain" id="PRO_0000381331" description="Biotin synthase">
    <location>
        <begin position="1"/>
        <end position="321"/>
    </location>
</feature>
<feature type="domain" description="Radical SAM core" evidence="2">
    <location>
        <begin position="37"/>
        <end position="264"/>
    </location>
</feature>
<feature type="binding site" evidence="1">
    <location>
        <position position="52"/>
    </location>
    <ligand>
        <name>[4Fe-4S] cluster</name>
        <dbReference type="ChEBI" id="CHEBI:49883"/>
        <note>4Fe-4S-S-AdoMet</note>
    </ligand>
</feature>
<feature type="binding site" evidence="1">
    <location>
        <position position="56"/>
    </location>
    <ligand>
        <name>[4Fe-4S] cluster</name>
        <dbReference type="ChEBI" id="CHEBI:49883"/>
        <note>4Fe-4S-S-AdoMet</note>
    </ligand>
</feature>
<feature type="binding site" evidence="1">
    <location>
        <position position="59"/>
    </location>
    <ligand>
        <name>[4Fe-4S] cluster</name>
        <dbReference type="ChEBI" id="CHEBI:49883"/>
        <note>4Fe-4S-S-AdoMet</note>
    </ligand>
</feature>
<feature type="binding site" evidence="1">
    <location>
        <position position="96"/>
    </location>
    <ligand>
        <name>[2Fe-2S] cluster</name>
        <dbReference type="ChEBI" id="CHEBI:190135"/>
    </ligand>
</feature>
<feature type="binding site" evidence="1">
    <location>
        <position position="127"/>
    </location>
    <ligand>
        <name>[2Fe-2S] cluster</name>
        <dbReference type="ChEBI" id="CHEBI:190135"/>
    </ligand>
</feature>
<feature type="binding site" evidence="1">
    <location>
        <position position="187"/>
    </location>
    <ligand>
        <name>[2Fe-2S] cluster</name>
        <dbReference type="ChEBI" id="CHEBI:190135"/>
    </ligand>
</feature>
<feature type="binding site" evidence="1">
    <location>
        <position position="259"/>
    </location>
    <ligand>
        <name>[2Fe-2S] cluster</name>
        <dbReference type="ChEBI" id="CHEBI:190135"/>
    </ligand>
</feature>
<accession>B6J725</accession>
<protein>
    <recommendedName>
        <fullName evidence="1">Biotin synthase</fullName>
        <ecNumber evidence="1">2.8.1.6</ecNumber>
    </recommendedName>
</protein>
<proteinExistence type="inferred from homology"/>
<reference key="1">
    <citation type="journal article" date="2009" name="Infect. Immun.">
        <title>Comparative genomics reveal extensive transposon-mediated genomic plasticity and diversity among potential effector proteins within the genus Coxiella.</title>
        <authorList>
            <person name="Beare P.A."/>
            <person name="Unsworth N."/>
            <person name="Andoh M."/>
            <person name="Voth D.E."/>
            <person name="Omsland A."/>
            <person name="Gilk S.D."/>
            <person name="Williams K.P."/>
            <person name="Sobral B.W."/>
            <person name="Kupko J.J. III"/>
            <person name="Porcella S.F."/>
            <person name="Samuel J.E."/>
            <person name="Heinzen R.A."/>
        </authorList>
    </citation>
    <scope>NUCLEOTIDE SEQUENCE [LARGE SCALE GENOMIC DNA]</scope>
    <source>
        <strain>CbuK_Q154</strain>
    </source>
</reference>
<gene>
    <name evidence="1" type="primary">bioB</name>
    <name type="ordered locus">CbuK_0835</name>
</gene>
<keyword id="KW-0001">2Fe-2S</keyword>
<keyword id="KW-0004">4Fe-4S</keyword>
<keyword id="KW-0093">Biotin biosynthesis</keyword>
<keyword id="KW-0408">Iron</keyword>
<keyword id="KW-0411">Iron-sulfur</keyword>
<keyword id="KW-0479">Metal-binding</keyword>
<keyword id="KW-0949">S-adenosyl-L-methionine</keyword>
<keyword id="KW-0808">Transferase</keyword>